<sequence>MAGHSKWANIQHRKGRQDAARSKLFSKLSKEITVAAKMGDPDPEKNPRLRLAVKEAKSNSVPKDVIDRAIKKATGGDAENYDEIRYEGYGPNGVAVIVETMTDNKNRTASTVRSTFSKNGGNLGETGSVGFMFERKGEVTYPASVGDADTVMMAAIEAGAEDVESSEDGHVIFCADTDLNEVSNALEAELGESESTKLIWKPTTTTELDLEGMQKLMKLVDALEDDDDVQRVTTNFEASDEVMAQL</sequence>
<reference key="1">
    <citation type="submission" date="2006-05" db="EMBL/GenBank/DDBJ databases">
        <title>Complete sequence of chromosome of Silicibacter sp. TM1040.</title>
        <authorList>
            <consortium name="US DOE Joint Genome Institute"/>
            <person name="Copeland A."/>
            <person name="Lucas S."/>
            <person name="Lapidus A."/>
            <person name="Barry K."/>
            <person name="Detter J.C."/>
            <person name="Glavina del Rio T."/>
            <person name="Hammon N."/>
            <person name="Israni S."/>
            <person name="Dalin E."/>
            <person name="Tice H."/>
            <person name="Pitluck S."/>
            <person name="Brettin T."/>
            <person name="Bruce D."/>
            <person name="Han C."/>
            <person name="Tapia R."/>
            <person name="Goodwin L."/>
            <person name="Thompson L.S."/>
            <person name="Gilna P."/>
            <person name="Schmutz J."/>
            <person name="Larimer F."/>
            <person name="Land M."/>
            <person name="Hauser L."/>
            <person name="Kyrpides N."/>
            <person name="Kim E."/>
            <person name="Belas R."/>
            <person name="Moran M.A."/>
            <person name="Buchan A."/>
            <person name="Gonzalez J.M."/>
            <person name="Schell M.A."/>
            <person name="Sun F."/>
            <person name="Richardson P."/>
        </authorList>
    </citation>
    <scope>NUCLEOTIDE SEQUENCE [LARGE SCALE GENOMIC DNA]</scope>
    <source>
        <strain>TM1040</strain>
    </source>
</reference>
<evidence type="ECO:0000255" key="1">
    <source>
        <dbReference type="HAMAP-Rule" id="MF_00693"/>
    </source>
</evidence>
<evidence type="ECO:0000256" key="2">
    <source>
        <dbReference type="SAM" id="MobiDB-lite"/>
    </source>
</evidence>
<evidence type="ECO:0000305" key="3"/>
<accession>Q1GFE0</accession>
<dbReference type="EMBL" id="CP000377">
    <property type="protein sequence ID" value="ABF64626.1"/>
    <property type="status" value="ALT_INIT"/>
    <property type="molecule type" value="Genomic_DNA"/>
</dbReference>
<dbReference type="RefSeq" id="WP_011539221.1">
    <property type="nucleotide sequence ID" value="NC_008044.1"/>
</dbReference>
<dbReference type="SMR" id="Q1GFE0"/>
<dbReference type="STRING" id="292414.TM1040_1893"/>
<dbReference type="KEGG" id="sit:TM1040_1893"/>
<dbReference type="eggNOG" id="COG0217">
    <property type="taxonomic scope" value="Bacteria"/>
</dbReference>
<dbReference type="HOGENOM" id="CLU_062974_2_1_5"/>
<dbReference type="OrthoDB" id="9781053at2"/>
<dbReference type="Proteomes" id="UP000000636">
    <property type="component" value="Chromosome"/>
</dbReference>
<dbReference type="GO" id="GO:0005829">
    <property type="term" value="C:cytosol"/>
    <property type="evidence" value="ECO:0007669"/>
    <property type="project" value="TreeGrafter"/>
</dbReference>
<dbReference type="GO" id="GO:0003677">
    <property type="term" value="F:DNA binding"/>
    <property type="evidence" value="ECO:0007669"/>
    <property type="project" value="UniProtKB-UniRule"/>
</dbReference>
<dbReference type="GO" id="GO:0006355">
    <property type="term" value="P:regulation of DNA-templated transcription"/>
    <property type="evidence" value="ECO:0007669"/>
    <property type="project" value="UniProtKB-UniRule"/>
</dbReference>
<dbReference type="FunFam" id="1.10.10.200:FF:000002">
    <property type="entry name" value="Probable transcriptional regulatory protein CLM62_37755"/>
    <property type="match status" value="1"/>
</dbReference>
<dbReference type="Gene3D" id="1.10.10.200">
    <property type="match status" value="1"/>
</dbReference>
<dbReference type="Gene3D" id="3.30.70.980">
    <property type="match status" value="2"/>
</dbReference>
<dbReference type="HAMAP" id="MF_00693">
    <property type="entry name" value="Transcrip_reg_TACO1"/>
    <property type="match status" value="1"/>
</dbReference>
<dbReference type="InterPro" id="IPR017856">
    <property type="entry name" value="Integrase-like_N"/>
</dbReference>
<dbReference type="InterPro" id="IPR048300">
    <property type="entry name" value="TACO1_YebC-like_2nd/3rd_dom"/>
</dbReference>
<dbReference type="InterPro" id="IPR049083">
    <property type="entry name" value="TACO1_YebC_N"/>
</dbReference>
<dbReference type="InterPro" id="IPR002876">
    <property type="entry name" value="Transcrip_reg_TACO1-like"/>
</dbReference>
<dbReference type="InterPro" id="IPR026564">
    <property type="entry name" value="Transcrip_reg_TACO1-like_dom3"/>
</dbReference>
<dbReference type="InterPro" id="IPR029072">
    <property type="entry name" value="YebC-like"/>
</dbReference>
<dbReference type="NCBIfam" id="NF001030">
    <property type="entry name" value="PRK00110.1"/>
    <property type="match status" value="1"/>
</dbReference>
<dbReference type="NCBIfam" id="NF009044">
    <property type="entry name" value="PRK12378.1"/>
    <property type="match status" value="1"/>
</dbReference>
<dbReference type="NCBIfam" id="TIGR01033">
    <property type="entry name" value="YebC/PmpR family DNA-binding transcriptional regulator"/>
    <property type="match status" value="1"/>
</dbReference>
<dbReference type="PANTHER" id="PTHR12532:SF6">
    <property type="entry name" value="TRANSCRIPTIONAL REGULATORY PROTEIN YEBC-RELATED"/>
    <property type="match status" value="1"/>
</dbReference>
<dbReference type="PANTHER" id="PTHR12532">
    <property type="entry name" value="TRANSLATIONAL ACTIVATOR OF CYTOCHROME C OXIDASE 1"/>
    <property type="match status" value="1"/>
</dbReference>
<dbReference type="Pfam" id="PF20772">
    <property type="entry name" value="TACO1_YebC_N"/>
    <property type="match status" value="1"/>
</dbReference>
<dbReference type="Pfam" id="PF01709">
    <property type="entry name" value="Transcrip_reg"/>
    <property type="match status" value="1"/>
</dbReference>
<dbReference type="SUPFAM" id="SSF75625">
    <property type="entry name" value="YebC-like"/>
    <property type="match status" value="1"/>
</dbReference>
<feature type="chain" id="PRO_0000257133" description="Probable transcriptional regulatory protein TM1040_1893">
    <location>
        <begin position="1"/>
        <end position="246"/>
    </location>
</feature>
<feature type="region of interest" description="Disordered" evidence="2">
    <location>
        <begin position="1"/>
        <end position="21"/>
    </location>
</feature>
<gene>
    <name type="ordered locus">TM1040_1893</name>
</gene>
<protein>
    <recommendedName>
        <fullName evidence="1">Probable transcriptional regulatory protein TM1040_1893</fullName>
    </recommendedName>
</protein>
<name>Y1893_RUEST</name>
<proteinExistence type="inferred from homology"/>
<comment type="subcellular location">
    <subcellularLocation>
        <location evidence="1">Cytoplasm</location>
    </subcellularLocation>
</comment>
<comment type="similarity">
    <text evidence="1">Belongs to the TACO1 family.</text>
</comment>
<comment type="sequence caution" evidence="3">
    <conflict type="erroneous initiation">
        <sequence resource="EMBL-CDS" id="ABF64626"/>
    </conflict>
</comment>
<keyword id="KW-0963">Cytoplasm</keyword>
<keyword id="KW-0238">DNA-binding</keyword>
<keyword id="KW-1185">Reference proteome</keyword>
<keyword id="KW-0804">Transcription</keyword>
<keyword id="KW-0805">Transcription regulation</keyword>
<organism>
    <name type="scientific">Ruegeria sp. (strain TM1040)</name>
    <name type="common">Silicibacter sp.</name>
    <dbReference type="NCBI Taxonomy" id="292414"/>
    <lineage>
        <taxon>Bacteria</taxon>
        <taxon>Pseudomonadati</taxon>
        <taxon>Pseudomonadota</taxon>
        <taxon>Alphaproteobacteria</taxon>
        <taxon>Rhodobacterales</taxon>
        <taxon>Roseobacteraceae</taxon>
        <taxon>Ruegeria</taxon>
    </lineage>
</organism>